<comment type="sequence caution" evidence="1">
    <conflict type="erroneous initiation">
        <sequence resource="EMBL-CDS" id="AAA83057"/>
    </conflict>
    <text>Truncated N-terminus.</text>
</comment>
<protein>
    <recommendedName>
        <fullName>Uncharacterized protein YqeC</fullName>
    </recommendedName>
</protein>
<proteinExistence type="predicted"/>
<feature type="chain" id="PRO_0000169345" description="Uncharacterized protein YqeC">
    <location>
        <begin position="1"/>
        <end position="256"/>
    </location>
</feature>
<dbReference type="EMBL" id="U28375">
    <property type="protein sequence ID" value="AAA83057.1"/>
    <property type="status" value="ALT_INIT"/>
    <property type="molecule type" value="Genomic_DNA"/>
</dbReference>
<dbReference type="EMBL" id="U00096">
    <property type="protein sequence ID" value="AAC75914.2"/>
    <property type="molecule type" value="Genomic_DNA"/>
</dbReference>
<dbReference type="EMBL" id="AP009048">
    <property type="protein sequence ID" value="BAE76942.1"/>
    <property type="molecule type" value="Genomic_DNA"/>
</dbReference>
<dbReference type="PIR" id="D65071">
    <property type="entry name" value="D65071"/>
</dbReference>
<dbReference type="RefSeq" id="NP_417352.2">
    <property type="nucleotide sequence ID" value="NC_000913.3"/>
</dbReference>
<dbReference type="RefSeq" id="WP_001298920.1">
    <property type="nucleotide sequence ID" value="NZ_LN832404.1"/>
</dbReference>
<dbReference type="BioGRID" id="4259704">
    <property type="interactions" value="10"/>
</dbReference>
<dbReference type="FunCoup" id="Q46809">
    <property type="interactions" value="23"/>
</dbReference>
<dbReference type="STRING" id="511145.b2876"/>
<dbReference type="PaxDb" id="511145-b2876"/>
<dbReference type="EnsemblBacteria" id="AAC75914">
    <property type="protein sequence ID" value="AAC75914"/>
    <property type="gene ID" value="b2876"/>
</dbReference>
<dbReference type="GeneID" id="93779126"/>
<dbReference type="GeneID" id="947350"/>
<dbReference type="KEGG" id="ecj:JW5464"/>
<dbReference type="KEGG" id="eco:b2876"/>
<dbReference type="KEGG" id="ecoc:C3026_15775"/>
<dbReference type="PATRIC" id="fig|511145.12.peg.2969"/>
<dbReference type="EchoBASE" id="EB2871"/>
<dbReference type="eggNOG" id="COG0769">
    <property type="taxonomic scope" value="Bacteria"/>
</dbReference>
<dbReference type="HOGENOM" id="CLU_068045_2_0_6"/>
<dbReference type="InParanoid" id="Q46809"/>
<dbReference type="OMA" id="HRWPLFS"/>
<dbReference type="OrthoDB" id="368187at2"/>
<dbReference type="PhylomeDB" id="Q46809"/>
<dbReference type="BioCyc" id="EcoCyc:G7495-MONOMER"/>
<dbReference type="PRO" id="PR:Q46809"/>
<dbReference type="Proteomes" id="UP000000625">
    <property type="component" value="Chromosome"/>
</dbReference>
<dbReference type="GO" id="GO:0005524">
    <property type="term" value="F:ATP binding"/>
    <property type="evidence" value="ECO:0007669"/>
    <property type="project" value="InterPro"/>
</dbReference>
<dbReference type="GO" id="GO:0009058">
    <property type="term" value="P:biosynthetic process"/>
    <property type="evidence" value="ECO:0007669"/>
    <property type="project" value="InterPro"/>
</dbReference>
<dbReference type="Gene3D" id="3.40.1190.10">
    <property type="entry name" value="Mur-like, catalytic domain"/>
    <property type="match status" value="1"/>
</dbReference>
<dbReference type="InterPro" id="IPR036565">
    <property type="entry name" value="Mur-like_cat_sf"/>
</dbReference>
<dbReference type="InterPro" id="IPR017587">
    <property type="entry name" value="YqeC"/>
</dbReference>
<dbReference type="NCBIfam" id="TIGR03172">
    <property type="entry name" value="selenium cofactor biosynthesis protein YqeC"/>
    <property type="match status" value="1"/>
</dbReference>
<dbReference type="Pfam" id="PF19842">
    <property type="entry name" value="YqeC"/>
    <property type="match status" value="1"/>
</dbReference>
<dbReference type="SUPFAM" id="SSF53623">
    <property type="entry name" value="MurD-like peptide ligases, catalytic domain"/>
    <property type="match status" value="1"/>
</dbReference>
<evidence type="ECO:0000305" key="1"/>
<keyword id="KW-1185">Reference proteome</keyword>
<name>YQEC_ECOLI</name>
<organism>
    <name type="scientific">Escherichia coli (strain K12)</name>
    <dbReference type="NCBI Taxonomy" id="83333"/>
    <lineage>
        <taxon>Bacteria</taxon>
        <taxon>Pseudomonadati</taxon>
        <taxon>Pseudomonadota</taxon>
        <taxon>Gammaproteobacteria</taxon>
        <taxon>Enterobacterales</taxon>
        <taxon>Enterobacteriaceae</taxon>
        <taxon>Escherichia</taxon>
    </lineage>
</organism>
<sequence length="256" mass="28103">MKSIVDPSALVIDLGAQKRPTVISVVGAGGKTSLLFWLAELLQASGRRVLITTTTHMFMPTSHWPVVFCRDPAMLPHASLTSPISFCFHSWKANQGKVQGFTPEAIDALVQRPECDVILIEADGSRGMPLKAPDEHEPCIPKSSCCVIAVMGGHTLGAKVSTENVHRWSQFADITGLTPDATLQLSDLVALVRHPQGAFKNVPQGCRRVWFINRFSQCENAIAQSELLQPLQQHDVEAIWLGDIQEHPAIARRFVN</sequence>
<gene>
    <name type="primary">yqeC</name>
    <name type="ordered locus">b2876</name>
    <name type="ordered locus">JW5464</name>
</gene>
<accession>Q46809</accession>
<accession>Q2M9W4</accession>
<reference key="1">
    <citation type="journal article" date="1997" name="Science">
        <title>The complete genome sequence of Escherichia coli K-12.</title>
        <authorList>
            <person name="Blattner F.R."/>
            <person name="Plunkett G. III"/>
            <person name="Bloch C.A."/>
            <person name="Perna N.T."/>
            <person name="Burland V."/>
            <person name="Riley M."/>
            <person name="Collado-Vides J."/>
            <person name="Glasner J.D."/>
            <person name="Rode C.K."/>
            <person name="Mayhew G.F."/>
            <person name="Gregor J."/>
            <person name="Davis N.W."/>
            <person name="Kirkpatrick H.A."/>
            <person name="Goeden M.A."/>
            <person name="Rose D.J."/>
            <person name="Mau B."/>
            <person name="Shao Y."/>
        </authorList>
    </citation>
    <scope>NUCLEOTIDE SEQUENCE [LARGE SCALE GENOMIC DNA]</scope>
    <source>
        <strain>K12 / MG1655 / ATCC 47076</strain>
    </source>
</reference>
<reference key="2">
    <citation type="journal article" date="2006" name="Mol. Syst. Biol.">
        <title>Highly accurate genome sequences of Escherichia coli K-12 strains MG1655 and W3110.</title>
        <authorList>
            <person name="Hayashi K."/>
            <person name="Morooka N."/>
            <person name="Yamamoto Y."/>
            <person name="Fujita K."/>
            <person name="Isono K."/>
            <person name="Choi S."/>
            <person name="Ohtsubo E."/>
            <person name="Baba T."/>
            <person name="Wanner B.L."/>
            <person name="Mori H."/>
            <person name="Horiuchi T."/>
        </authorList>
    </citation>
    <scope>NUCLEOTIDE SEQUENCE [LARGE SCALE GENOMIC DNA]</scope>
    <source>
        <strain>K12 / W3110 / ATCC 27325 / DSM 5911</strain>
    </source>
</reference>